<accession>A0PW60</accession>
<protein>
    <recommendedName>
        <fullName evidence="1">Bifunctional protein GlmU</fullName>
    </recommendedName>
    <domain>
        <recommendedName>
            <fullName evidence="1">UDP-N-acetylglucosamine pyrophosphorylase</fullName>
            <ecNumber evidence="1">2.7.7.23</ecNumber>
        </recommendedName>
        <alternativeName>
            <fullName evidence="1">N-acetylglucosamine-1-phosphate uridyltransferase</fullName>
        </alternativeName>
    </domain>
    <domain>
        <recommendedName>
            <fullName evidence="1">Glucosamine-1-phosphate N-acetyltransferase</fullName>
            <ecNumber evidence="1">2.3.1.157</ecNumber>
        </recommendedName>
    </domain>
</protein>
<gene>
    <name evidence="1" type="primary">glmU</name>
    <name type="ordered locus">MUL_4637</name>
</gene>
<evidence type="ECO:0000255" key="1">
    <source>
        <dbReference type="HAMAP-Rule" id="MF_01631"/>
    </source>
</evidence>
<evidence type="ECO:0000256" key="2">
    <source>
        <dbReference type="SAM" id="MobiDB-lite"/>
    </source>
</evidence>
<keyword id="KW-0012">Acyltransferase</keyword>
<keyword id="KW-0133">Cell shape</keyword>
<keyword id="KW-0961">Cell wall biogenesis/degradation</keyword>
<keyword id="KW-0963">Cytoplasm</keyword>
<keyword id="KW-0460">Magnesium</keyword>
<keyword id="KW-0479">Metal-binding</keyword>
<keyword id="KW-0511">Multifunctional enzyme</keyword>
<keyword id="KW-0548">Nucleotidyltransferase</keyword>
<keyword id="KW-0573">Peptidoglycan synthesis</keyword>
<keyword id="KW-0677">Repeat</keyword>
<keyword id="KW-0808">Transferase</keyword>
<name>GLMU_MYCUA</name>
<organism>
    <name type="scientific">Mycobacterium ulcerans (strain Agy99)</name>
    <dbReference type="NCBI Taxonomy" id="362242"/>
    <lineage>
        <taxon>Bacteria</taxon>
        <taxon>Bacillati</taxon>
        <taxon>Actinomycetota</taxon>
        <taxon>Actinomycetes</taxon>
        <taxon>Mycobacteriales</taxon>
        <taxon>Mycobacteriaceae</taxon>
        <taxon>Mycobacterium</taxon>
        <taxon>Mycobacterium ulcerans group</taxon>
    </lineage>
</organism>
<proteinExistence type="inferred from homology"/>
<feature type="chain" id="PRO_0000337734" description="Bifunctional protein GlmU">
    <location>
        <begin position="1"/>
        <end position="492"/>
    </location>
</feature>
<feature type="region of interest" description="Pyrophosphorylase" evidence="1">
    <location>
        <begin position="1"/>
        <end position="241"/>
    </location>
</feature>
<feature type="region of interest" description="Linker" evidence="1">
    <location>
        <begin position="242"/>
        <end position="262"/>
    </location>
</feature>
<feature type="region of interest" description="N-acetyltransferase" evidence="1">
    <location>
        <begin position="263"/>
        <end position="492"/>
    </location>
</feature>
<feature type="region of interest" description="Disordered" evidence="2">
    <location>
        <begin position="443"/>
        <end position="492"/>
    </location>
</feature>
<feature type="active site" description="Proton acceptor" evidence="1">
    <location>
        <position position="374"/>
    </location>
</feature>
<feature type="binding site" evidence="1">
    <location>
        <begin position="12"/>
        <end position="15"/>
    </location>
    <ligand>
        <name>UDP-N-acetyl-alpha-D-glucosamine</name>
        <dbReference type="ChEBI" id="CHEBI:57705"/>
    </ligand>
</feature>
<feature type="binding site" evidence="1">
    <location>
        <position position="26"/>
    </location>
    <ligand>
        <name>UDP-N-acetyl-alpha-D-glucosamine</name>
        <dbReference type="ChEBI" id="CHEBI:57705"/>
    </ligand>
</feature>
<feature type="binding site" evidence="1">
    <location>
        <position position="83"/>
    </location>
    <ligand>
        <name>UDP-N-acetyl-alpha-D-glucosamine</name>
        <dbReference type="ChEBI" id="CHEBI:57705"/>
    </ligand>
</feature>
<feature type="binding site" evidence="1">
    <location>
        <begin position="88"/>
        <end position="89"/>
    </location>
    <ligand>
        <name>UDP-N-acetyl-alpha-D-glucosamine</name>
        <dbReference type="ChEBI" id="CHEBI:57705"/>
    </ligand>
</feature>
<feature type="binding site" evidence="1">
    <location>
        <position position="114"/>
    </location>
    <ligand>
        <name>Mg(2+)</name>
        <dbReference type="ChEBI" id="CHEBI:18420"/>
    </ligand>
</feature>
<feature type="binding site" evidence="1">
    <location>
        <position position="151"/>
    </location>
    <ligand>
        <name>UDP-N-acetyl-alpha-D-glucosamine</name>
        <dbReference type="ChEBI" id="CHEBI:57705"/>
    </ligand>
</feature>
<feature type="binding site" evidence="1">
    <location>
        <position position="166"/>
    </location>
    <ligand>
        <name>UDP-N-acetyl-alpha-D-glucosamine</name>
        <dbReference type="ChEBI" id="CHEBI:57705"/>
    </ligand>
</feature>
<feature type="binding site" evidence="1">
    <location>
        <position position="181"/>
    </location>
    <ligand>
        <name>UDP-N-acetyl-alpha-D-glucosamine</name>
        <dbReference type="ChEBI" id="CHEBI:57705"/>
    </ligand>
</feature>
<feature type="binding site" evidence="1">
    <location>
        <position position="239"/>
    </location>
    <ligand>
        <name>Mg(2+)</name>
        <dbReference type="ChEBI" id="CHEBI:18420"/>
    </ligand>
</feature>
<feature type="binding site" evidence="1">
    <location>
        <position position="239"/>
    </location>
    <ligand>
        <name>UDP-N-acetyl-alpha-D-glucosamine</name>
        <dbReference type="ChEBI" id="CHEBI:57705"/>
    </ligand>
</feature>
<feature type="binding site" evidence="1">
    <location>
        <position position="344"/>
    </location>
    <ligand>
        <name>UDP-N-acetyl-alpha-D-glucosamine</name>
        <dbReference type="ChEBI" id="CHEBI:57705"/>
    </ligand>
</feature>
<feature type="binding site" evidence="1">
    <location>
        <position position="362"/>
    </location>
    <ligand>
        <name>UDP-N-acetyl-alpha-D-glucosamine</name>
        <dbReference type="ChEBI" id="CHEBI:57705"/>
    </ligand>
</feature>
<feature type="binding site" evidence="1">
    <location>
        <position position="377"/>
    </location>
    <ligand>
        <name>UDP-N-acetyl-alpha-D-glucosamine</name>
        <dbReference type="ChEBI" id="CHEBI:57705"/>
    </ligand>
</feature>
<feature type="binding site" evidence="1">
    <location>
        <position position="388"/>
    </location>
    <ligand>
        <name>UDP-N-acetyl-alpha-D-glucosamine</name>
        <dbReference type="ChEBI" id="CHEBI:57705"/>
    </ligand>
</feature>
<feature type="binding site" evidence="1">
    <location>
        <position position="391"/>
    </location>
    <ligand>
        <name>acetyl-CoA</name>
        <dbReference type="ChEBI" id="CHEBI:57288"/>
    </ligand>
</feature>
<feature type="binding site" evidence="1">
    <location>
        <begin position="397"/>
        <end position="398"/>
    </location>
    <ligand>
        <name>acetyl-CoA</name>
        <dbReference type="ChEBI" id="CHEBI:57288"/>
    </ligand>
</feature>
<feature type="binding site" evidence="1">
    <location>
        <position position="434"/>
    </location>
    <ligand>
        <name>acetyl-CoA</name>
        <dbReference type="ChEBI" id="CHEBI:57288"/>
    </ligand>
</feature>
<dbReference type="EC" id="2.7.7.23" evidence="1"/>
<dbReference type="EC" id="2.3.1.157" evidence="1"/>
<dbReference type="EMBL" id="CP000325">
    <property type="protein sequence ID" value="ABL06579.1"/>
    <property type="molecule type" value="Genomic_DNA"/>
</dbReference>
<dbReference type="RefSeq" id="WP_011742174.1">
    <property type="nucleotide sequence ID" value="NC_008611.1"/>
</dbReference>
<dbReference type="SMR" id="A0PW60"/>
<dbReference type="KEGG" id="mul:MUL_4637"/>
<dbReference type="eggNOG" id="COG1207">
    <property type="taxonomic scope" value="Bacteria"/>
</dbReference>
<dbReference type="HOGENOM" id="CLU_029499_15_2_11"/>
<dbReference type="UniPathway" id="UPA00113">
    <property type="reaction ID" value="UER00532"/>
</dbReference>
<dbReference type="UniPathway" id="UPA00113">
    <property type="reaction ID" value="UER00533"/>
</dbReference>
<dbReference type="UniPathway" id="UPA00973"/>
<dbReference type="Proteomes" id="UP000000765">
    <property type="component" value="Chromosome"/>
</dbReference>
<dbReference type="GO" id="GO:0005737">
    <property type="term" value="C:cytoplasm"/>
    <property type="evidence" value="ECO:0007669"/>
    <property type="project" value="UniProtKB-SubCell"/>
</dbReference>
<dbReference type="GO" id="GO:0016020">
    <property type="term" value="C:membrane"/>
    <property type="evidence" value="ECO:0007669"/>
    <property type="project" value="GOC"/>
</dbReference>
<dbReference type="GO" id="GO:0019134">
    <property type="term" value="F:glucosamine-1-phosphate N-acetyltransferase activity"/>
    <property type="evidence" value="ECO:0007669"/>
    <property type="project" value="UniProtKB-UniRule"/>
</dbReference>
<dbReference type="GO" id="GO:0000287">
    <property type="term" value="F:magnesium ion binding"/>
    <property type="evidence" value="ECO:0007669"/>
    <property type="project" value="UniProtKB-UniRule"/>
</dbReference>
<dbReference type="GO" id="GO:0003977">
    <property type="term" value="F:UDP-N-acetylglucosamine diphosphorylase activity"/>
    <property type="evidence" value="ECO:0007669"/>
    <property type="project" value="UniProtKB-UniRule"/>
</dbReference>
<dbReference type="GO" id="GO:0000902">
    <property type="term" value="P:cell morphogenesis"/>
    <property type="evidence" value="ECO:0007669"/>
    <property type="project" value="UniProtKB-UniRule"/>
</dbReference>
<dbReference type="GO" id="GO:0071555">
    <property type="term" value="P:cell wall organization"/>
    <property type="evidence" value="ECO:0007669"/>
    <property type="project" value="UniProtKB-KW"/>
</dbReference>
<dbReference type="GO" id="GO:0009245">
    <property type="term" value="P:lipid A biosynthetic process"/>
    <property type="evidence" value="ECO:0007669"/>
    <property type="project" value="UniProtKB-UniRule"/>
</dbReference>
<dbReference type="GO" id="GO:0009252">
    <property type="term" value="P:peptidoglycan biosynthetic process"/>
    <property type="evidence" value="ECO:0007669"/>
    <property type="project" value="UniProtKB-UniRule"/>
</dbReference>
<dbReference type="GO" id="GO:0008360">
    <property type="term" value="P:regulation of cell shape"/>
    <property type="evidence" value="ECO:0007669"/>
    <property type="project" value="UniProtKB-KW"/>
</dbReference>
<dbReference type="GO" id="GO:0006048">
    <property type="term" value="P:UDP-N-acetylglucosamine biosynthetic process"/>
    <property type="evidence" value="ECO:0007669"/>
    <property type="project" value="UniProtKB-UniPathway"/>
</dbReference>
<dbReference type="CDD" id="cd02540">
    <property type="entry name" value="GT2_GlmU_N_bac"/>
    <property type="match status" value="1"/>
</dbReference>
<dbReference type="CDD" id="cd03353">
    <property type="entry name" value="LbH_GlmU_C"/>
    <property type="match status" value="1"/>
</dbReference>
<dbReference type="Gene3D" id="2.160.10.10">
    <property type="entry name" value="Hexapeptide repeat proteins"/>
    <property type="match status" value="1"/>
</dbReference>
<dbReference type="Gene3D" id="3.90.550.10">
    <property type="entry name" value="Spore Coat Polysaccharide Biosynthesis Protein SpsA, Chain A"/>
    <property type="match status" value="1"/>
</dbReference>
<dbReference type="HAMAP" id="MF_01631">
    <property type="entry name" value="GlmU"/>
    <property type="match status" value="1"/>
</dbReference>
<dbReference type="InterPro" id="IPR005882">
    <property type="entry name" value="Bifunctional_GlmU"/>
</dbReference>
<dbReference type="InterPro" id="IPR050065">
    <property type="entry name" value="GlmU-like"/>
</dbReference>
<dbReference type="InterPro" id="IPR038009">
    <property type="entry name" value="GlmU_C_LbH"/>
</dbReference>
<dbReference type="InterPro" id="IPR001451">
    <property type="entry name" value="Hexapep"/>
</dbReference>
<dbReference type="InterPro" id="IPR025877">
    <property type="entry name" value="MobA-like_NTP_Trfase"/>
</dbReference>
<dbReference type="InterPro" id="IPR029044">
    <property type="entry name" value="Nucleotide-diphossugar_trans"/>
</dbReference>
<dbReference type="InterPro" id="IPR011004">
    <property type="entry name" value="Trimer_LpxA-like_sf"/>
</dbReference>
<dbReference type="NCBIfam" id="TIGR01173">
    <property type="entry name" value="glmU"/>
    <property type="match status" value="1"/>
</dbReference>
<dbReference type="NCBIfam" id="NF010932">
    <property type="entry name" value="PRK14352.1"/>
    <property type="match status" value="1"/>
</dbReference>
<dbReference type="PANTHER" id="PTHR43584:SF3">
    <property type="entry name" value="BIFUNCTIONAL PROTEIN GLMU"/>
    <property type="match status" value="1"/>
</dbReference>
<dbReference type="PANTHER" id="PTHR43584">
    <property type="entry name" value="NUCLEOTIDYL TRANSFERASE"/>
    <property type="match status" value="1"/>
</dbReference>
<dbReference type="Pfam" id="PF00132">
    <property type="entry name" value="Hexapep"/>
    <property type="match status" value="1"/>
</dbReference>
<dbReference type="Pfam" id="PF12804">
    <property type="entry name" value="NTP_transf_3"/>
    <property type="match status" value="1"/>
</dbReference>
<dbReference type="SUPFAM" id="SSF53448">
    <property type="entry name" value="Nucleotide-diphospho-sugar transferases"/>
    <property type="match status" value="1"/>
</dbReference>
<dbReference type="SUPFAM" id="SSF51161">
    <property type="entry name" value="Trimeric LpxA-like enzymes"/>
    <property type="match status" value="1"/>
</dbReference>
<reference key="1">
    <citation type="journal article" date="2007" name="Genome Res.">
        <title>Reductive evolution and niche adaptation inferred from the genome of Mycobacterium ulcerans, the causative agent of Buruli ulcer.</title>
        <authorList>
            <person name="Stinear T.P."/>
            <person name="Seemann T."/>
            <person name="Pidot S."/>
            <person name="Frigui W."/>
            <person name="Reysset G."/>
            <person name="Garnier T."/>
            <person name="Meurice G."/>
            <person name="Simon D."/>
            <person name="Bouchier C."/>
            <person name="Ma L."/>
            <person name="Tichit M."/>
            <person name="Porter J.L."/>
            <person name="Ryan J."/>
            <person name="Johnson P.D.R."/>
            <person name="Davies J.K."/>
            <person name="Jenkin G.A."/>
            <person name="Small P.L.C."/>
            <person name="Jones L.M."/>
            <person name="Tekaia F."/>
            <person name="Laval F."/>
            <person name="Daffe M."/>
            <person name="Parkhill J."/>
            <person name="Cole S.T."/>
        </authorList>
    </citation>
    <scope>NUCLEOTIDE SEQUENCE [LARGE SCALE GENOMIC DNA]</scope>
    <source>
        <strain>Agy99</strain>
    </source>
</reference>
<comment type="function">
    <text evidence="1">Catalyzes the last two sequential reactions in the de novo biosynthetic pathway for UDP-N-acetylglucosamine (UDP-GlcNAc). The C-terminal domain catalyzes the transfer of acetyl group from acetyl coenzyme A to glucosamine-1-phosphate (GlcN-1-P) to produce N-acetylglucosamine-1-phosphate (GlcNAc-1-P), which is converted into UDP-GlcNAc by the transfer of uridine 5-monophosphate (from uridine 5-triphosphate), a reaction catalyzed by the N-terminal domain.</text>
</comment>
<comment type="catalytic activity">
    <reaction evidence="1">
        <text>alpha-D-glucosamine 1-phosphate + acetyl-CoA = N-acetyl-alpha-D-glucosamine 1-phosphate + CoA + H(+)</text>
        <dbReference type="Rhea" id="RHEA:13725"/>
        <dbReference type="ChEBI" id="CHEBI:15378"/>
        <dbReference type="ChEBI" id="CHEBI:57287"/>
        <dbReference type="ChEBI" id="CHEBI:57288"/>
        <dbReference type="ChEBI" id="CHEBI:57776"/>
        <dbReference type="ChEBI" id="CHEBI:58516"/>
        <dbReference type="EC" id="2.3.1.157"/>
    </reaction>
</comment>
<comment type="catalytic activity">
    <reaction evidence="1">
        <text>N-acetyl-alpha-D-glucosamine 1-phosphate + UTP + H(+) = UDP-N-acetyl-alpha-D-glucosamine + diphosphate</text>
        <dbReference type="Rhea" id="RHEA:13509"/>
        <dbReference type="ChEBI" id="CHEBI:15378"/>
        <dbReference type="ChEBI" id="CHEBI:33019"/>
        <dbReference type="ChEBI" id="CHEBI:46398"/>
        <dbReference type="ChEBI" id="CHEBI:57705"/>
        <dbReference type="ChEBI" id="CHEBI:57776"/>
        <dbReference type="EC" id="2.7.7.23"/>
    </reaction>
</comment>
<comment type="cofactor">
    <cofactor evidence="1">
        <name>Mg(2+)</name>
        <dbReference type="ChEBI" id="CHEBI:18420"/>
    </cofactor>
    <text evidence="1">Binds 1 Mg(2+) ion per subunit.</text>
</comment>
<comment type="pathway">
    <text evidence="1">Nucleotide-sugar biosynthesis; UDP-N-acetyl-alpha-D-glucosamine biosynthesis; N-acetyl-alpha-D-glucosamine 1-phosphate from alpha-D-glucosamine 6-phosphate (route II): step 2/2.</text>
</comment>
<comment type="pathway">
    <text evidence="1">Nucleotide-sugar biosynthesis; UDP-N-acetyl-alpha-D-glucosamine biosynthesis; UDP-N-acetyl-alpha-D-glucosamine from N-acetyl-alpha-D-glucosamine 1-phosphate: step 1/1.</text>
</comment>
<comment type="pathway">
    <text evidence="1">Bacterial outer membrane biogenesis; LPS lipid A biosynthesis.</text>
</comment>
<comment type="subunit">
    <text evidence="1">Homotrimer.</text>
</comment>
<comment type="subcellular location">
    <subcellularLocation>
        <location evidence="1">Cytoplasm</location>
    </subcellularLocation>
</comment>
<comment type="similarity">
    <text evidence="1">In the N-terminal section; belongs to the N-acetylglucosamine-1-phosphate uridyltransferase family.</text>
</comment>
<comment type="similarity">
    <text evidence="1">In the C-terminal section; belongs to the transferase hexapeptide repeat family.</text>
</comment>
<sequence>MTFRGDTAVVVLAAGAGTRMRSDTPKVLHTLAGRSMLSHSLHAMAKLAPQHLVVVLGHCHERISPLVDELAESLGRTINVTLQDRPLGTGDAVRCGLSALPADYSGIVVVTAGDTPLLDAETVADLIETHSATSSAVTVLTTTLSDPHGYGRILRTQDNAVMAIVEQTDATPSQREIREVNAGVYAFEITALQSALSRLSSDNAQQELYLPDVIAILRRDGQTVSARHIDDSALVAGVNDRVQLAQLGAELNRRIVAAHQMAGVTVIDPATTWIDVDAAIGRDTVIQPGTQLLGHTQIGDRCEIGPDTTLTDVTVGDNASVVRTHGSSSSIGAAAAVGPFTYLRPGTVLGTGGKLGAFVETKNSTIGAGTKVPHLTYVGDADIGDDSNIGAGSVFVNYDGMTKNRATIGSHVRSGAGTRFVAPVNVGDGAYTGAGTVIRDDVPPGALAVSGGPQRNIEDWVQQKRPGTPSAEAARKASAEQSTPPPDADHPP</sequence>